<reference key="1">
    <citation type="journal article" date="1984" name="Eur. J. Biochem.">
        <title>Cloning and structure analysis of the rat apolipoprotein A-I cDNA.</title>
        <authorList>
            <person name="Poncin J.E."/>
            <person name="Martial J.A."/>
            <person name="Gielen J.E."/>
        </authorList>
    </citation>
    <scope>NUCLEOTIDE SEQUENCE [MRNA]</scope>
</reference>
<reference key="2">
    <citation type="journal article" date="1986" name="J. Biol. Chem.">
        <title>Linkage, evolution, and expression of the rat apolipoprotein A-I, C-III, and A-IV genes.</title>
        <authorList>
            <person name="Haddad I.A."/>
            <person name="Ordovas J.M."/>
            <person name="Fitzpatrick T."/>
            <person name="Karathanasis S.K."/>
        </authorList>
    </citation>
    <scope>NUCLEOTIDE SEQUENCE [GENOMIC DNA]</scope>
</reference>
<reference key="3">
    <citation type="journal article" date="1997" name="Biochem. Mol. Biol. Int.">
        <title>Repetitive elements in the third intron of murine apolipoprotein A-I gene.</title>
        <authorList>
            <person name="Chiang A.-N."/>
            <person name="Fan K.-C."/>
            <person name="Shaw G.-C."/>
            <person name="Yang U.-C."/>
        </authorList>
    </citation>
    <scope>NUCLEOTIDE SEQUENCE [GENOMIC DNA]</scope>
    <source>
        <strain>SHRSP</strain>
        <strain>Wistar Kyoto</strain>
        <tissue>Spleen</tissue>
    </source>
</reference>
<reference key="4">
    <citation type="journal article" date="2004" name="Genome Res.">
        <title>The status, quality, and expansion of the NIH full-length cDNA project: the Mammalian Gene Collection (MGC).</title>
        <authorList>
            <consortium name="The MGC Project Team"/>
        </authorList>
    </citation>
    <scope>NUCLEOTIDE SEQUENCE [LARGE SCALE MRNA]</scope>
    <source>
        <tissue>Liver</tissue>
    </source>
</reference>
<reference key="5">
    <citation type="journal article" date="1982" name="J. Biol. Chem.">
        <title>The primary translation product of rat intestinal apolipoprotein A-I mRNA is an unusual preproprotein.</title>
        <authorList>
            <person name="Gordon J.I."/>
            <person name="Smith D.P."/>
            <person name="Andy R."/>
            <person name="Alpers D.H."/>
            <person name="Schonfeld G."/>
            <person name="Strauss A.W."/>
        </authorList>
    </citation>
    <scope>PROTEIN SEQUENCE OF 1-45 (PRECURSOR PROTEIN)</scope>
    <source>
        <strain>Sprague-Dawley</strain>
    </source>
</reference>
<reference key="6">
    <citation type="submission" date="2007-04" db="UniProtKB">
        <authorList>
            <person name="Lubec G."/>
            <person name="Diao W."/>
        </authorList>
    </citation>
    <scope>PROTEIN SEQUENCE OF 36-46; 162-168 AND 202-212</scope>
    <scope>IDENTIFICATION BY MASS SPECTROMETRY</scope>
    <source>
        <strain>Sprague-Dawley</strain>
        <tissue>Hippocampus</tissue>
    </source>
</reference>
<dbReference type="EMBL" id="M00001">
    <property type="protein sequence ID" value="AAA40749.1"/>
    <property type="molecule type" value="mRNA"/>
</dbReference>
<dbReference type="EMBL" id="X00558">
    <property type="protein sequence ID" value="CAA25224.1"/>
    <property type="molecule type" value="mRNA"/>
</dbReference>
<dbReference type="EMBL" id="J02597">
    <property type="protein sequence ID" value="AAA40745.1"/>
    <property type="molecule type" value="Genomic_DNA"/>
</dbReference>
<dbReference type="EMBL" id="U79576">
    <property type="protein sequence ID" value="AAB58428.1"/>
    <property type="molecule type" value="Genomic_DNA"/>
</dbReference>
<dbReference type="EMBL" id="U79577">
    <property type="protein sequence ID" value="AAB58429.1"/>
    <property type="molecule type" value="Genomic_DNA"/>
</dbReference>
<dbReference type="EMBL" id="U79578">
    <property type="protein sequence ID" value="AAB58430.1"/>
    <property type="molecule type" value="Genomic_DNA"/>
</dbReference>
<dbReference type="EMBL" id="BC089820">
    <property type="protein sequence ID" value="AAH89820.1"/>
    <property type="molecule type" value="mRNA"/>
</dbReference>
<dbReference type="PIR" id="A24700">
    <property type="entry name" value="A24700"/>
</dbReference>
<dbReference type="RefSeq" id="NP_036870.1">
    <property type="nucleotide sequence ID" value="NM_012738.2"/>
</dbReference>
<dbReference type="SMR" id="P04639"/>
<dbReference type="BioGRID" id="247155">
    <property type="interactions" value="1"/>
</dbReference>
<dbReference type="DIP" id="DIP-29911N"/>
<dbReference type="FunCoup" id="P04639">
    <property type="interactions" value="142"/>
</dbReference>
<dbReference type="IntAct" id="P04639">
    <property type="interactions" value="4"/>
</dbReference>
<dbReference type="STRING" id="10116.ENSRNOP00000065206"/>
<dbReference type="CarbonylDB" id="P04639"/>
<dbReference type="iPTMnet" id="P04639"/>
<dbReference type="PhosphoSitePlus" id="P04639"/>
<dbReference type="PaxDb" id="10116-ENSRNOP00000065206"/>
<dbReference type="Ensembl" id="ENSRNOT00000074357.3">
    <property type="protein sequence ID" value="ENSRNOP00000065206.1"/>
    <property type="gene ID" value="ENSRNOG00000045679.3"/>
</dbReference>
<dbReference type="GeneID" id="25081"/>
<dbReference type="KEGG" id="rno:25081"/>
<dbReference type="AGR" id="RGD:2130"/>
<dbReference type="CTD" id="335"/>
<dbReference type="RGD" id="2130">
    <property type="gene designation" value="Apoa1"/>
</dbReference>
<dbReference type="eggNOG" id="ENOG502S1XQ">
    <property type="taxonomic scope" value="Eukaryota"/>
</dbReference>
<dbReference type="GeneTree" id="ENSGT00950000182929"/>
<dbReference type="HOGENOM" id="CLU_058447_1_0_1"/>
<dbReference type="InParanoid" id="P04639"/>
<dbReference type="OMA" id="EYVAQFE"/>
<dbReference type="OrthoDB" id="71075at9989"/>
<dbReference type="PhylomeDB" id="P04639"/>
<dbReference type="Reactome" id="R-RNO-114608">
    <property type="pathway name" value="Platelet degranulation"/>
</dbReference>
<dbReference type="Reactome" id="R-RNO-1369062">
    <property type="pathway name" value="ABC transporters in lipid homeostasis"/>
</dbReference>
<dbReference type="Reactome" id="R-RNO-2168880">
    <property type="pathway name" value="Scavenging of heme from plasma"/>
</dbReference>
<dbReference type="Reactome" id="R-RNO-3000471">
    <property type="pathway name" value="Scavenging by Class B Receptors"/>
</dbReference>
<dbReference type="Reactome" id="R-RNO-3000480">
    <property type="pathway name" value="Scavenging by Class A Receptors"/>
</dbReference>
<dbReference type="Reactome" id="R-RNO-381426">
    <property type="pathway name" value="Regulation of Insulin-like Growth Factor (IGF) transport and uptake by Insulin-like Growth Factor Binding Proteins (IGFBPs)"/>
</dbReference>
<dbReference type="Reactome" id="R-RNO-8957275">
    <property type="pathway name" value="Post-translational protein phosphorylation"/>
</dbReference>
<dbReference type="Reactome" id="R-RNO-8963888">
    <property type="pathway name" value="Chylomicron assembly"/>
</dbReference>
<dbReference type="Reactome" id="R-RNO-8963896">
    <property type="pathway name" value="HDL assembly"/>
</dbReference>
<dbReference type="Reactome" id="R-RNO-8963901">
    <property type="pathway name" value="Chylomicron remodeling"/>
</dbReference>
<dbReference type="Reactome" id="R-RNO-8964011">
    <property type="pathway name" value="HDL clearance"/>
</dbReference>
<dbReference type="Reactome" id="R-RNO-8964058">
    <property type="pathway name" value="HDL remodeling"/>
</dbReference>
<dbReference type="Reactome" id="R-RNO-9707616">
    <property type="pathway name" value="Heme signaling"/>
</dbReference>
<dbReference type="Reactome" id="R-RNO-975634">
    <property type="pathway name" value="Retinoid metabolism and transport"/>
</dbReference>
<dbReference type="PRO" id="PR:P04639"/>
<dbReference type="Proteomes" id="UP000002494">
    <property type="component" value="Chromosome 8"/>
</dbReference>
<dbReference type="Bgee" id="ENSRNOG00000045679">
    <property type="expression patterns" value="Expressed in jejunum and 18 other cell types or tissues"/>
</dbReference>
<dbReference type="GO" id="GO:0009986">
    <property type="term" value="C:cell surface"/>
    <property type="evidence" value="ECO:0000314"/>
    <property type="project" value="RGD"/>
</dbReference>
<dbReference type="GO" id="GO:0042627">
    <property type="term" value="C:chylomicron"/>
    <property type="evidence" value="ECO:0000318"/>
    <property type="project" value="GO_Central"/>
</dbReference>
<dbReference type="GO" id="GO:0031410">
    <property type="term" value="C:cytoplasmic vesicle"/>
    <property type="evidence" value="ECO:0000266"/>
    <property type="project" value="RGD"/>
</dbReference>
<dbReference type="GO" id="GO:0034365">
    <property type="term" value="C:discoidal high-density lipoprotein particle"/>
    <property type="evidence" value="ECO:0000314"/>
    <property type="project" value="RGD"/>
</dbReference>
<dbReference type="GO" id="GO:0030139">
    <property type="term" value="C:endocytic vesicle"/>
    <property type="evidence" value="ECO:0000266"/>
    <property type="project" value="RGD"/>
</dbReference>
<dbReference type="GO" id="GO:0005576">
    <property type="term" value="C:extracellular region"/>
    <property type="evidence" value="ECO:0000266"/>
    <property type="project" value="RGD"/>
</dbReference>
<dbReference type="GO" id="GO:0005615">
    <property type="term" value="C:extracellular space"/>
    <property type="evidence" value="ECO:0000314"/>
    <property type="project" value="RGD"/>
</dbReference>
<dbReference type="GO" id="GO:1903561">
    <property type="term" value="C:extracellular vesicle"/>
    <property type="evidence" value="ECO:0000318"/>
    <property type="project" value="GO_Central"/>
</dbReference>
<dbReference type="GO" id="GO:0034364">
    <property type="term" value="C:high-density lipoprotein particle"/>
    <property type="evidence" value="ECO:0000314"/>
    <property type="project" value="ARUK-UCL"/>
</dbReference>
<dbReference type="GO" id="GO:0034363">
    <property type="term" value="C:intermediate-density lipoprotein particle"/>
    <property type="evidence" value="ECO:0000314"/>
    <property type="project" value="ARUK-UCL"/>
</dbReference>
<dbReference type="GO" id="GO:0034362">
    <property type="term" value="C:low-density lipoprotein particle"/>
    <property type="evidence" value="ECO:0000314"/>
    <property type="project" value="ARUK-UCL"/>
</dbReference>
<dbReference type="GO" id="GO:0034366">
    <property type="term" value="C:spherical high-density lipoprotein particle"/>
    <property type="evidence" value="ECO:0000266"/>
    <property type="project" value="RGD"/>
</dbReference>
<dbReference type="GO" id="GO:0034361">
    <property type="term" value="C:very-low-density lipoprotein particle"/>
    <property type="evidence" value="ECO:0000266"/>
    <property type="project" value="RGD"/>
</dbReference>
<dbReference type="GO" id="GO:0001540">
    <property type="term" value="F:amyloid-beta binding"/>
    <property type="evidence" value="ECO:0000353"/>
    <property type="project" value="ARUK-UCL"/>
</dbReference>
<dbReference type="GO" id="GO:0034191">
    <property type="term" value="F:apolipoprotein A-I receptor binding"/>
    <property type="evidence" value="ECO:0000266"/>
    <property type="project" value="RGD"/>
</dbReference>
<dbReference type="GO" id="GO:0034190">
    <property type="term" value="F:apolipoprotein receptor binding"/>
    <property type="evidence" value="ECO:0000266"/>
    <property type="project" value="RGD"/>
</dbReference>
<dbReference type="GO" id="GO:0045499">
    <property type="term" value="F:chemorepellent activity"/>
    <property type="evidence" value="ECO:0000266"/>
    <property type="project" value="RGD"/>
</dbReference>
<dbReference type="GO" id="GO:0015485">
    <property type="term" value="F:cholesterol binding"/>
    <property type="evidence" value="ECO:0000266"/>
    <property type="project" value="RGD"/>
</dbReference>
<dbReference type="GO" id="GO:0120020">
    <property type="term" value="F:cholesterol transfer activity"/>
    <property type="evidence" value="ECO:0000314"/>
    <property type="project" value="RGD"/>
</dbReference>
<dbReference type="GO" id="GO:0019899">
    <property type="term" value="F:enzyme binding"/>
    <property type="evidence" value="ECO:0000266"/>
    <property type="project" value="RGD"/>
</dbReference>
<dbReference type="GO" id="GO:0031072">
    <property type="term" value="F:heat shock protein binding"/>
    <property type="evidence" value="ECO:0000266"/>
    <property type="project" value="RGD"/>
</dbReference>
<dbReference type="GO" id="GO:0008035">
    <property type="term" value="F:high-density lipoprotein particle binding"/>
    <property type="evidence" value="ECO:0000266"/>
    <property type="project" value="RGD"/>
</dbReference>
<dbReference type="GO" id="GO:0070653">
    <property type="term" value="F:high-density lipoprotein particle receptor binding"/>
    <property type="evidence" value="ECO:0000266"/>
    <property type="project" value="RGD"/>
</dbReference>
<dbReference type="GO" id="GO:0042802">
    <property type="term" value="F:identical protein binding"/>
    <property type="evidence" value="ECO:0000266"/>
    <property type="project" value="RGD"/>
</dbReference>
<dbReference type="GO" id="GO:0055102">
    <property type="term" value="F:lipase inhibitor activity"/>
    <property type="evidence" value="ECO:0000314"/>
    <property type="project" value="RGD"/>
</dbReference>
<dbReference type="GO" id="GO:0008289">
    <property type="term" value="F:lipid binding"/>
    <property type="evidence" value="ECO:0000266"/>
    <property type="project" value="RGD"/>
</dbReference>
<dbReference type="GO" id="GO:0005319">
    <property type="term" value="F:lipid transporter activity"/>
    <property type="evidence" value="ECO:0000266"/>
    <property type="project" value="RGD"/>
</dbReference>
<dbReference type="GO" id="GO:0071813">
    <property type="term" value="F:lipoprotein particle binding"/>
    <property type="evidence" value="ECO:0000266"/>
    <property type="project" value="RGD"/>
</dbReference>
<dbReference type="GO" id="GO:0060228">
    <property type="term" value="F:phosphatidylcholine-sterol O-acyltransferase activator activity"/>
    <property type="evidence" value="ECO:0000266"/>
    <property type="project" value="RGD"/>
</dbReference>
<dbReference type="GO" id="GO:0005543">
    <property type="term" value="F:phospholipid binding"/>
    <property type="evidence" value="ECO:0000266"/>
    <property type="project" value="RGD"/>
</dbReference>
<dbReference type="GO" id="GO:0042803">
    <property type="term" value="F:protein homodimerization activity"/>
    <property type="evidence" value="ECO:0000250"/>
    <property type="project" value="UniProtKB"/>
</dbReference>
<dbReference type="GO" id="GO:0048018">
    <property type="term" value="F:receptor ligand activity"/>
    <property type="evidence" value="ECO:0000266"/>
    <property type="project" value="RGD"/>
</dbReference>
<dbReference type="GO" id="GO:0005102">
    <property type="term" value="F:signaling receptor binding"/>
    <property type="evidence" value="ECO:0000266"/>
    <property type="project" value="RGD"/>
</dbReference>
<dbReference type="GO" id="GO:0055090">
    <property type="term" value="P:acylglycerol homeostasis"/>
    <property type="evidence" value="ECO:0000318"/>
    <property type="project" value="GO_Central"/>
</dbReference>
<dbReference type="GO" id="GO:0030325">
    <property type="term" value="P:adrenal gland development"/>
    <property type="evidence" value="ECO:0000266"/>
    <property type="project" value="RGD"/>
</dbReference>
<dbReference type="GO" id="GO:0034205">
    <property type="term" value="P:amyloid-beta formation"/>
    <property type="evidence" value="ECO:0000266"/>
    <property type="project" value="RGD"/>
</dbReference>
<dbReference type="GO" id="GO:0031100">
    <property type="term" value="P:animal organ regeneration"/>
    <property type="evidence" value="ECO:0000314"/>
    <property type="project" value="RGD"/>
</dbReference>
<dbReference type="GO" id="GO:0043534">
    <property type="term" value="P:blood vessel endothelial cell migration"/>
    <property type="evidence" value="ECO:0000266"/>
    <property type="project" value="RGD"/>
</dbReference>
<dbReference type="GO" id="GO:0071402">
    <property type="term" value="P:cellular response to lipoprotein particle stimulus"/>
    <property type="evidence" value="ECO:0000266"/>
    <property type="project" value="RGD"/>
</dbReference>
<dbReference type="GO" id="GO:0006695">
    <property type="term" value="P:cholesterol biosynthetic process"/>
    <property type="evidence" value="ECO:0000266"/>
    <property type="project" value="RGD"/>
</dbReference>
<dbReference type="GO" id="GO:0033344">
    <property type="term" value="P:cholesterol efflux"/>
    <property type="evidence" value="ECO:0000266"/>
    <property type="project" value="RGD"/>
</dbReference>
<dbReference type="GO" id="GO:0042632">
    <property type="term" value="P:cholesterol homeostasis"/>
    <property type="evidence" value="ECO:0000266"/>
    <property type="project" value="RGD"/>
</dbReference>
<dbReference type="GO" id="GO:0070508">
    <property type="term" value="P:cholesterol import"/>
    <property type="evidence" value="ECO:0000266"/>
    <property type="project" value="RGD"/>
</dbReference>
<dbReference type="GO" id="GO:0008203">
    <property type="term" value="P:cholesterol metabolic process"/>
    <property type="evidence" value="ECO:0000266"/>
    <property type="project" value="RGD"/>
</dbReference>
<dbReference type="GO" id="GO:0030301">
    <property type="term" value="P:cholesterol transport"/>
    <property type="evidence" value="ECO:0000314"/>
    <property type="project" value="RGD"/>
</dbReference>
<dbReference type="GO" id="GO:0001935">
    <property type="term" value="P:endothelial cell proliferation"/>
    <property type="evidence" value="ECO:0000266"/>
    <property type="project" value="RGD"/>
</dbReference>
<dbReference type="GO" id="GO:0007186">
    <property type="term" value="P:G protein-coupled receptor signaling pathway"/>
    <property type="evidence" value="ECO:0000266"/>
    <property type="project" value="RGD"/>
</dbReference>
<dbReference type="GO" id="GO:0008211">
    <property type="term" value="P:glucocorticoid metabolic process"/>
    <property type="evidence" value="ECO:0000266"/>
    <property type="project" value="RGD"/>
</dbReference>
<dbReference type="GO" id="GO:0034380">
    <property type="term" value="P:high-density lipoprotein particle assembly"/>
    <property type="evidence" value="ECO:0000266"/>
    <property type="project" value="RGD"/>
</dbReference>
<dbReference type="GO" id="GO:0034375">
    <property type="term" value="P:high-density lipoprotein particle remodeling"/>
    <property type="evidence" value="ECO:0000266"/>
    <property type="project" value="RGD"/>
</dbReference>
<dbReference type="GO" id="GO:0007229">
    <property type="term" value="P:integrin-mediated signaling pathway"/>
    <property type="evidence" value="ECO:0000266"/>
    <property type="project" value="RGD"/>
</dbReference>
<dbReference type="GO" id="GO:0019915">
    <property type="term" value="P:lipid storage"/>
    <property type="evidence" value="ECO:0000266"/>
    <property type="project" value="RGD"/>
</dbReference>
<dbReference type="GO" id="GO:0042158">
    <property type="term" value="P:lipoprotein biosynthetic process"/>
    <property type="evidence" value="ECO:0000266"/>
    <property type="project" value="RGD"/>
</dbReference>
<dbReference type="GO" id="GO:0050919">
    <property type="term" value="P:negative chemotaxis"/>
    <property type="evidence" value="ECO:0000266"/>
    <property type="project" value="RGD"/>
</dbReference>
<dbReference type="GO" id="GO:0060354">
    <property type="term" value="P:negative regulation of cell adhesion molecule production"/>
    <property type="evidence" value="ECO:0000266"/>
    <property type="project" value="RGD"/>
</dbReference>
<dbReference type="GO" id="GO:0002719">
    <property type="term" value="P:negative regulation of cytokine production involved in immune response"/>
    <property type="evidence" value="ECO:0000266"/>
    <property type="project" value="RGD"/>
</dbReference>
<dbReference type="GO" id="GO:0034115">
    <property type="term" value="P:negative regulation of heterotypic cell-cell adhesion"/>
    <property type="evidence" value="ECO:0000266"/>
    <property type="project" value="RGD"/>
</dbReference>
<dbReference type="GO" id="GO:0050728">
    <property type="term" value="P:negative regulation of inflammatory response"/>
    <property type="evidence" value="ECO:0000266"/>
    <property type="project" value="RGD"/>
</dbReference>
<dbReference type="GO" id="GO:0032691">
    <property type="term" value="P:negative regulation of interleukin-1 beta production"/>
    <property type="evidence" value="ECO:0000266"/>
    <property type="project" value="RGD"/>
</dbReference>
<dbReference type="GO" id="GO:0060761">
    <property type="term" value="P:negative regulation of response to cytokine stimulus"/>
    <property type="evidence" value="ECO:0000266"/>
    <property type="project" value="RGD"/>
</dbReference>
<dbReference type="GO" id="GO:0010804">
    <property type="term" value="P:negative regulation of tumor necrosis factor-mediated signaling pathway"/>
    <property type="evidence" value="ECO:0000266"/>
    <property type="project" value="RGD"/>
</dbReference>
<dbReference type="GO" id="GO:0010903">
    <property type="term" value="P:negative regulation of very-low-density lipoprotein particle remodeling"/>
    <property type="evidence" value="ECO:0000266"/>
    <property type="project" value="RGD"/>
</dbReference>
<dbReference type="GO" id="GO:0014012">
    <property type="term" value="P:peripheral nervous system axon regeneration"/>
    <property type="evidence" value="ECO:0000270"/>
    <property type="project" value="RGD"/>
</dbReference>
<dbReference type="GO" id="GO:0006656">
    <property type="term" value="P:phosphatidylcholine biosynthetic process"/>
    <property type="evidence" value="ECO:0000266"/>
    <property type="project" value="RGD"/>
</dbReference>
<dbReference type="GO" id="GO:0033700">
    <property type="term" value="P:phospholipid efflux"/>
    <property type="evidence" value="ECO:0000266"/>
    <property type="project" value="RGD"/>
</dbReference>
<dbReference type="GO" id="GO:0055091">
    <property type="term" value="P:phospholipid homeostasis"/>
    <property type="evidence" value="ECO:0000266"/>
    <property type="project" value="RGD"/>
</dbReference>
<dbReference type="GO" id="GO:0006644">
    <property type="term" value="P:phospholipid metabolic process"/>
    <property type="evidence" value="ECO:0000266"/>
    <property type="project" value="RGD"/>
</dbReference>
<dbReference type="GO" id="GO:0015914">
    <property type="term" value="P:phospholipid transport"/>
    <property type="evidence" value="ECO:0000314"/>
    <property type="project" value="RGD"/>
</dbReference>
<dbReference type="GO" id="GO:0010875">
    <property type="term" value="P:positive regulation of cholesterol efflux"/>
    <property type="evidence" value="ECO:0000250"/>
    <property type="project" value="UniProtKB"/>
</dbReference>
<dbReference type="GO" id="GO:0090205">
    <property type="term" value="P:positive regulation of cholesterol metabolic process"/>
    <property type="evidence" value="ECO:0000266"/>
    <property type="project" value="RGD"/>
</dbReference>
<dbReference type="GO" id="GO:0050766">
    <property type="term" value="P:positive regulation of phagocytosis"/>
    <property type="evidence" value="ECO:0000250"/>
    <property type="project" value="UniProtKB"/>
</dbReference>
<dbReference type="GO" id="GO:1902995">
    <property type="term" value="P:positive regulation of phospholipid efflux"/>
    <property type="evidence" value="ECO:0000250"/>
    <property type="project" value="UniProtKB"/>
</dbReference>
<dbReference type="GO" id="GO:0035025">
    <property type="term" value="P:positive regulation of Rho protein signal transduction"/>
    <property type="evidence" value="ECO:0000266"/>
    <property type="project" value="RGD"/>
</dbReference>
<dbReference type="GO" id="GO:0051496">
    <property type="term" value="P:positive regulation of stress fiber assembly"/>
    <property type="evidence" value="ECO:0000266"/>
    <property type="project" value="RGD"/>
</dbReference>
<dbReference type="GO" id="GO:1900026">
    <property type="term" value="P:positive regulation of substrate adhesion-dependent cell spreading"/>
    <property type="evidence" value="ECO:0000266"/>
    <property type="project" value="RGD"/>
</dbReference>
<dbReference type="GO" id="GO:0050821">
    <property type="term" value="P:protein stabilization"/>
    <property type="evidence" value="ECO:0000250"/>
    <property type="project" value="UniProtKB"/>
</dbReference>
<dbReference type="GO" id="GO:0032489">
    <property type="term" value="P:regulation of Cdc42 protein signal transduction"/>
    <property type="evidence" value="ECO:0000266"/>
    <property type="project" value="RGD"/>
</dbReference>
<dbReference type="GO" id="GO:0030300">
    <property type="term" value="P:regulation of intestinal cholesterol absorption"/>
    <property type="evidence" value="ECO:0000266"/>
    <property type="project" value="RGD"/>
</dbReference>
<dbReference type="GO" id="GO:0043627">
    <property type="term" value="P:response to estrogen"/>
    <property type="evidence" value="ECO:0000270"/>
    <property type="project" value="RGD"/>
</dbReference>
<dbReference type="GO" id="GO:0007584">
    <property type="term" value="P:response to nutrient"/>
    <property type="evidence" value="ECO:0000270"/>
    <property type="project" value="RGD"/>
</dbReference>
<dbReference type="GO" id="GO:0009410">
    <property type="term" value="P:response to xenobiotic stimulus"/>
    <property type="evidence" value="ECO:0000270"/>
    <property type="project" value="RGD"/>
</dbReference>
<dbReference type="GO" id="GO:0043691">
    <property type="term" value="P:reverse cholesterol transport"/>
    <property type="evidence" value="ECO:0000266"/>
    <property type="project" value="RGD"/>
</dbReference>
<dbReference type="GO" id="GO:0070328">
    <property type="term" value="P:triglyceride homeostasis"/>
    <property type="evidence" value="ECO:0000266"/>
    <property type="project" value="RGD"/>
</dbReference>
<dbReference type="GO" id="GO:0051180">
    <property type="term" value="P:vitamin transport"/>
    <property type="evidence" value="ECO:0000266"/>
    <property type="project" value="RGD"/>
</dbReference>
<dbReference type="FunFam" id="1.20.120.20:FF:000001">
    <property type="entry name" value="Apolipoprotein A-I"/>
    <property type="match status" value="1"/>
</dbReference>
<dbReference type="FunFam" id="1.20.5.20:FF:000001">
    <property type="entry name" value="apolipoprotein A-I"/>
    <property type="match status" value="1"/>
</dbReference>
<dbReference type="Gene3D" id="1.20.5.20">
    <property type="match status" value="1"/>
</dbReference>
<dbReference type="Gene3D" id="6.10.140.380">
    <property type="match status" value="1"/>
</dbReference>
<dbReference type="Gene3D" id="1.20.120.20">
    <property type="entry name" value="Apolipoprotein"/>
    <property type="match status" value="1"/>
</dbReference>
<dbReference type="InterPro" id="IPR000074">
    <property type="entry name" value="ApoA_E"/>
</dbReference>
<dbReference type="InterPro" id="IPR050163">
    <property type="entry name" value="Apolipoprotein_A1/A4/E"/>
</dbReference>
<dbReference type="PANTHER" id="PTHR18976">
    <property type="entry name" value="APOLIPOPROTEIN"/>
    <property type="match status" value="1"/>
</dbReference>
<dbReference type="PANTHER" id="PTHR18976:SF11">
    <property type="entry name" value="APOLIPOPROTEIN A-I"/>
    <property type="match status" value="1"/>
</dbReference>
<dbReference type="Pfam" id="PF01442">
    <property type="entry name" value="Apolipoprotein"/>
    <property type="match status" value="1"/>
</dbReference>
<dbReference type="SUPFAM" id="SSF58113">
    <property type="entry name" value="Apolipoprotein A-I"/>
    <property type="match status" value="1"/>
</dbReference>
<comment type="function">
    <text>Participates in the reverse transport of cholesterol from tissues to the liver for excretion by promoting cholesterol efflux from tissues and by acting as a cofactor for the lecithin cholesterol acyltransferase (LCAT). As part of the SPAP complex, activates spermatozoa motility.</text>
</comment>
<comment type="subunit">
    <text evidence="2 3">Homodimer (By similarity). Interacts with APOA1BP and CLU. Component of a sperm activating protein complex (SPAP), consisting of APOA1, an immunoglobulin heavy chain, an immunoglobulin light chain and albumin. Interacts with NDRG1. Interacts with SCGB3A2 (By similarity). Interacts with NAXE and YJEFN3 (By similarity).</text>
</comment>
<comment type="interaction">
    <interactant intactId="EBI-2925493">
        <id>P04639</id>
    </interactant>
    <interactant intactId="EBI-15185298">
        <id>Q7TMA5</id>
        <label>Apob</label>
    </interactant>
    <organismsDiffer>false</organismsDiffer>
    <experiments>2</experiments>
</comment>
<comment type="subcellular location">
    <subcellularLocation>
        <location>Secreted</location>
    </subcellularLocation>
</comment>
<comment type="tissue specificity">
    <text>Major protein of plasma HDL, also found in chylomicrons.</text>
</comment>
<comment type="PTM">
    <text evidence="1">Glycosylated.</text>
</comment>
<comment type="PTM">
    <text evidence="1">Palmitoylated.</text>
</comment>
<comment type="PTM">
    <text evidence="1">Phosphorylation sites are present in the extracellular medium.</text>
</comment>
<comment type="similarity">
    <text evidence="5">Belongs to the apolipoprotein A1/A4/E family.</text>
</comment>
<name>APOA1_RAT</name>
<gene>
    <name type="primary">Apoa1</name>
</gene>
<keyword id="KW-0153">Cholesterol metabolism</keyword>
<keyword id="KW-0903">Direct protein sequencing</keyword>
<keyword id="KW-0325">Glycoprotein</keyword>
<keyword id="KW-0345">HDL</keyword>
<keyword id="KW-0443">Lipid metabolism</keyword>
<keyword id="KW-0445">Lipid transport</keyword>
<keyword id="KW-0449">Lipoprotein</keyword>
<keyword id="KW-0558">Oxidation</keyword>
<keyword id="KW-0564">Palmitate</keyword>
<keyword id="KW-0597">Phosphoprotein</keyword>
<keyword id="KW-1185">Reference proteome</keyword>
<keyword id="KW-0677">Repeat</keyword>
<keyword id="KW-0964">Secreted</keyword>
<keyword id="KW-0732">Signal</keyword>
<keyword id="KW-0753">Steroid metabolism</keyword>
<keyword id="KW-1207">Sterol metabolism</keyword>
<keyword id="KW-0813">Transport</keyword>
<accession>P04639</accession>
<accession>O08877</accession>
<accession>O09054</accession>
<accession>Q5EBB2</accession>
<organism>
    <name type="scientific">Rattus norvegicus</name>
    <name type="common">Rat</name>
    <dbReference type="NCBI Taxonomy" id="10116"/>
    <lineage>
        <taxon>Eukaryota</taxon>
        <taxon>Metazoa</taxon>
        <taxon>Chordata</taxon>
        <taxon>Craniata</taxon>
        <taxon>Vertebrata</taxon>
        <taxon>Euteleostomi</taxon>
        <taxon>Mammalia</taxon>
        <taxon>Eutheria</taxon>
        <taxon>Euarchontoglires</taxon>
        <taxon>Glires</taxon>
        <taxon>Rodentia</taxon>
        <taxon>Myomorpha</taxon>
        <taxon>Muroidea</taxon>
        <taxon>Muridae</taxon>
        <taxon>Murinae</taxon>
        <taxon>Rattus</taxon>
    </lineage>
</organism>
<protein>
    <recommendedName>
        <fullName>Apolipoprotein A-I</fullName>
        <shortName>Apo-AI</shortName>
        <shortName>ApoA-I</shortName>
    </recommendedName>
    <alternativeName>
        <fullName>Apolipoprotein A1</fullName>
    </alternativeName>
    <component>
        <recommendedName>
            <fullName>Proapolipoprotein A-I</fullName>
            <shortName>ProapoA-I</shortName>
        </recommendedName>
    </component>
</protein>
<proteinExistence type="evidence at protein level"/>
<evidence type="ECO:0000250" key="1"/>
<evidence type="ECO:0000250" key="2">
    <source>
        <dbReference type="UniProtKB" id="G5BQH5"/>
    </source>
</evidence>
<evidence type="ECO:0000250" key="3">
    <source>
        <dbReference type="UniProtKB" id="P02647"/>
    </source>
</evidence>
<evidence type="ECO:0000269" key="4">
    <source>
    </source>
</evidence>
<evidence type="ECO:0000305" key="5"/>
<feature type="signal peptide" evidence="4">
    <location>
        <begin position="1"/>
        <end position="18"/>
    </location>
</feature>
<feature type="chain" id="PRO_0000425335" description="Proapolipoprotein A-I">
    <location>
        <begin position="19"/>
        <end position="259"/>
    </location>
</feature>
<feature type="chain" id="PRO_0000001954" description="Apolipoprotein A-I">
    <location>
        <begin position="25"/>
        <end position="259"/>
    </location>
</feature>
<feature type="repeat" description="1">
    <location>
        <begin position="67"/>
        <end position="88"/>
    </location>
</feature>
<feature type="repeat" description="2">
    <location>
        <begin position="89"/>
        <end position="110"/>
    </location>
</feature>
<feature type="repeat" description="3; half-length">
    <location>
        <begin position="111"/>
        <end position="121"/>
    </location>
</feature>
<feature type="repeat" description="4">
    <location>
        <begin position="122"/>
        <end position="143"/>
    </location>
</feature>
<feature type="repeat" description="5; truncated">
    <location>
        <begin position="144"/>
        <end position="161"/>
    </location>
</feature>
<feature type="repeat" description="6">
    <location>
        <begin position="162"/>
        <end position="183"/>
    </location>
</feature>
<feature type="repeat" description="7; truncated">
    <location>
        <begin position="184"/>
        <end position="203"/>
    </location>
</feature>
<feature type="repeat" description="8">
    <location>
        <begin position="204"/>
        <end position="225"/>
    </location>
</feature>
<feature type="repeat" description="9; half-length">
    <location>
        <begin position="226"/>
        <end position="236"/>
    </location>
</feature>
<feature type="repeat" description="10">
    <location>
        <begin position="237"/>
        <end position="259"/>
    </location>
</feature>
<feature type="region of interest" description="10 X approximate tandem repeats">
    <location>
        <begin position="67"/>
        <end position="259"/>
    </location>
</feature>
<feature type="modified residue" description="Methionine sulfoxide" evidence="1">
    <location>
        <position position="109"/>
    </location>
</feature>
<feature type="modified residue" description="Methionine sulfoxide" evidence="1">
    <location>
        <position position="189"/>
    </location>
</feature>
<feature type="modified residue" description="Methionine sulfoxide" evidence="1">
    <location>
        <position position="236"/>
    </location>
</feature>
<feature type="sequence conflict" description="In Ref. 3; AAB58428/AAB58429/AAB58430." evidence="5" ref="3">
    <location>
        <position position="28"/>
    </location>
</feature>
<feature type="sequence conflict" description="In Ref. 3; AAB58428/AAB58429/AAB58430." evidence="5" ref="3">
    <original>E</original>
    <variation>D</variation>
    <location>
        <position position="93"/>
    </location>
</feature>
<feature type="sequence conflict" description="In Ref. 3; AAB58428/AAB58429/AAB58430." evidence="5" ref="3">
    <original>L</original>
    <variation>P</variation>
    <location>
        <position position="105"/>
    </location>
</feature>
<feature type="sequence conflict" description="In Ref. 3; AAB58428/AAB58429/AAB58430." evidence="5" ref="3">
    <original>G</original>
    <variation>A</variation>
    <location>
        <position position="146"/>
    </location>
</feature>
<feature type="sequence conflict" description="In Ref. 1; CAA25224." evidence="5" ref="1">
    <original>K</original>
    <variation>R</variation>
    <location>
        <position position="201"/>
    </location>
</feature>
<feature type="sequence conflict" description="In Ref. 1; CAA25224." evidence="5" ref="1">
    <original>S</original>
    <variation>G</variation>
    <location>
        <position position="214"/>
    </location>
</feature>
<feature type="sequence conflict" description="In Ref. 1; CAA25224." evidence="5" ref="1">
    <original>K</original>
    <variation>R</variation>
    <location>
        <position position="218"/>
    </location>
</feature>
<sequence length="259" mass="30062">MKAAVLAVALVFLTGCQAWEFWQQDEPQSQWDRVKDFATVYVDAVKDSGRDYVSQFESSTLGKQLNLNLLDNWDTLGSTVGRLQEQLGPVTQEFWANLEKETDWLRNEMNKDLENVKQKMQPHLDEFQEKWNEEVEAYRQKLEPLGTELHKNAKEMQRHLKVVAEEFRDRMRVNADALRAKFGLYSDQMRENLAQRLTEIKNHPTLIEYHTKASDHLKTLGEKAKPALDDLGQGLMPVLEAWKAKIMSMIDEAKKKLNA</sequence>